<evidence type="ECO:0000250" key="1"/>
<evidence type="ECO:0000305" key="2"/>
<organism>
    <name type="scientific">Megasphaera elsdenii</name>
    <dbReference type="NCBI Taxonomy" id="907"/>
    <lineage>
        <taxon>Bacteria</taxon>
        <taxon>Bacillati</taxon>
        <taxon>Bacillota</taxon>
        <taxon>Negativicutes</taxon>
        <taxon>Veillonellales</taxon>
        <taxon>Veillonellaceae</taxon>
        <taxon>Megasphaera</taxon>
    </lineage>
</organism>
<reference key="1">
    <citation type="journal article" date="1998" name="J. Biol. Chem.">
        <title>Cloning and analysis of the genes for a novel electron-transferring flavoprotein from Megasphaera elsdenii. Expression and characterization of the recombinant protein.</title>
        <authorList>
            <person name="O'Neill H."/>
            <person name="Mayhew S.G."/>
            <person name="Butler G."/>
        </authorList>
    </citation>
    <scope>NUCLEOTIDE SEQUENCE [GENOMIC DNA]</scope>
    <source>
        <strain>ATCC 25940 / DSM 20460 / JCM 1772 / NCIB 8927</strain>
    </source>
</reference>
<accession>O85691</accession>
<protein>
    <recommendedName>
        <fullName>Electron transfer flavoprotein subunit beta</fullName>
        <shortName>Beta-ETF</shortName>
    </recommendedName>
    <alternativeName>
        <fullName>Electron transfer flavoprotein small subunit</fullName>
        <shortName>ETFSS</shortName>
    </alternativeName>
</protein>
<feature type="chain" id="PRO_0000167879" description="Electron transfer flavoprotein subunit beta">
    <location>
        <begin position="1"/>
        <end position="270"/>
    </location>
</feature>
<proteinExistence type="inferred from homology"/>
<name>ETFB_MEGEL</name>
<dbReference type="EMBL" id="AF072475">
    <property type="protein sequence ID" value="AAC31169.1"/>
    <property type="molecule type" value="Genomic_DNA"/>
</dbReference>
<dbReference type="RefSeq" id="WP_014017063.1">
    <property type="nucleotide sequence ID" value="NZ_CAUBZQ010000010.1"/>
</dbReference>
<dbReference type="SMR" id="O85691"/>
<dbReference type="BioCyc" id="MetaCyc:MONOMER-21346"/>
<dbReference type="GO" id="GO:0009055">
    <property type="term" value="F:electron transfer activity"/>
    <property type="evidence" value="ECO:0007669"/>
    <property type="project" value="InterPro"/>
</dbReference>
<dbReference type="CDD" id="cd01714">
    <property type="entry name" value="ETF_beta"/>
    <property type="match status" value="1"/>
</dbReference>
<dbReference type="Gene3D" id="3.40.50.620">
    <property type="entry name" value="HUPs"/>
    <property type="match status" value="1"/>
</dbReference>
<dbReference type="InterPro" id="IPR014730">
    <property type="entry name" value="ETF_a/b_N"/>
</dbReference>
<dbReference type="InterPro" id="IPR012255">
    <property type="entry name" value="ETF_b"/>
</dbReference>
<dbReference type="InterPro" id="IPR033948">
    <property type="entry name" value="ETF_beta_N"/>
</dbReference>
<dbReference type="InterPro" id="IPR014729">
    <property type="entry name" value="Rossmann-like_a/b/a_fold"/>
</dbReference>
<dbReference type="PANTHER" id="PTHR21294">
    <property type="entry name" value="ELECTRON TRANSFER FLAVOPROTEIN BETA-SUBUNIT"/>
    <property type="match status" value="1"/>
</dbReference>
<dbReference type="PANTHER" id="PTHR21294:SF17">
    <property type="entry name" value="PROTEIN FIXA"/>
    <property type="match status" value="1"/>
</dbReference>
<dbReference type="Pfam" id="PF01012">
    <property type="entry name" value="ETF"/>
    <property type="match status" value="1"/>
</dbReference>
<dbReference type="PIRSF" id="PIRSF000090">
    <property type="entry name" value="Beta-ETF"/>
    <property type="match status" value="1"/>
</dbReference>
<dbReference type="SMART" id="SM00893">
    <property type="entry name" value="ETF"/>
    <property type="match status" value="1"/>
</dbReference>
<dbReference type="SUPFAM" id="SSF52402">
    <property type="entry name" value="Adenine nucleotide alpha hydrolases-like"/>
    <property type="match status" value="1"/>
</dbReference>
<comment type="function">
    <text evidence="1">The electron transfer flavoprotein serves as a specific electron acceptor for other dehydrogenases. It transfers the electrons to the main respiratory chain via ETF-ubiquinone oxidoreductase (ETF dehydrogenase) (By similarity).</text>
</comment>
<comment type="cofactor">
    <cofactor>
        <name>FAD</name>
        <dbReference type="ChEBI" id="CHEBI:57692"/>
    </cofactor>
    <text>Binds 2 FAD per dimer.</text>
</comment>
<comment type="subunit">
    <text>Heterodimer of an alpha and a beta subunit.</text>
</comment>
<comment type="similarity">
    <text evidence="2">Belongs to the ETF alpha-subunit/FixB family.</text>
</comment>
<sequence>MEILVCVKQVPDTAEVKIDPVKHTVIRAGVPNIFNPFDQNALEAALALKDADKDVKITLLSMGPDQAKDVLREGLAMGADDAYLLSDRKLGGSDTLATGYALAQAIKKLAADKGIEQFDIILCGKQAIDGDTAQVGPQIACELGIPQITYARDIKVEGDKVTVQQENEEGYIVTEAQFPVLITAVKDLNEPRFPTIRGTMKAKRREIPNLDAAAVAADDAQIGLSGSPTKVRKIFTPPQRSGGLVLKVEDDNEQAIVDQVMEKLVAQKII</sequence>
<gene>
    <name type="primary">etfB</name>
</gene>
<keyword id="KW-0249">Electron transport</keyword>
<keyword id="KW-0274">FAD</keyword>
<keyword id="KW-0285">Flavoprotein</keyword>
<keyword id="KW-0813">Transport</keyword>